<keyword id="KW-0963">Cytoplasm</keyword>
<keyword id="KW-0460">Magnesium</keyword>
<keyword id="KW-0479">Metal-binding</keyword>
<keyword id="KW-0548">Nucleotidyltransferase</keyword>
<keyword id="KW-0694">RNA-binding</keyword>
<keyword id="KW-0808">Transferase</keyword>
<organism>
    <name type="scientific">Helicobacter pylori (strain HPAG1)</name>
    <dbReference type="NCBI Taxonomy" id="357544"/>
    <lineage>
        <taxon>Bacteria</taxon>
        <taxon>Pseudomonadati</taxon>
        <taxon>Campylobacterota</taxon>
        <taxon>Epsilonproteobacteria</taxon>
        <taxon>Campylobacterales</taxon>
        <taxon>Helicobacteraceae</taxon>
        <taxon>Helicobacter</taxon>
    </lineage>
</organism>
<dbReference type="EC" id="2.7.7.8" evidence="1"/>
<dbReference type="EMBL" id="CP000241">
    <property type="protein sequence ID" value="ABF85221.1"/>
    <property type="molecule type" value="Genomic_DNA"/>
</dbReference>
<dbReference type="RefSeq" id="WP_000345877.1">
    <property type="nucleotide sequence ID" value="NC_008086.1"/>
</dbReference>
<dbReference type="SMR" id="Q1CS51"/>
<dbReference type="KEGG" id="hpa:HPAG1_1154"/>
<dbReference type="HOGENOM" id="CLU_004217_2_2_7"/>
<dbReference type="GO" id="GO:0005829">
    <property type="term" value="C:cytosol"/>
    <property type="evidence" value="ECO:0007669"/>
    <property type="project" value="TreeGrafter"/>
</dbReference>
<dbReference type="GO" id="GO:0000175">
    <property type="term" value="F:3'-5'-RNA exonuclease activity"/>
    <property type="evidence" value="ECO:0007669"/>
    <property type="project" value="TreeGrafter"/>
</dbReference>
<dbReference type="GO" id="GO:0000287">
    <property type="term" value="F:magnesium ion binding"/>
    <property type="evidence" value="ECO:0007669"/>
    <property type="project" value="UniProtKB-UniRule"/>
</dbReference>
<dbReference type="GO" id="GO:0004654">
    <property type="term" value="F:polyribonucleotide nucleotidyltransferase activity"/>
    <property type="evidence" value="ECO:0007669"/>
    <property type="project" value="UniProtKB-UniRule"/>
</dbReference>
<dbReference type="GO" id="GO:0003723">
    <property type="term" value="F:RNA binding"/>
    <property type="evidence" value="ECO:0007669"/>
    <property type="project" value="UniProtKB-UniRule"/>
</dbReference>
<dbReference type="GO" id="GO:0006402">
    <property type="term" value="P:mRNA catabolic process"/>
    <property type="evidence" value="ECO:0007669"/>
    <property type="project" value="UniProtKB-UniRule"/>
</dbReference>
<dbReference type="GO" id="GO:0006396">
    <property type="term" value="P:RNA processing"/>
    <property type="evidence" value="ECO:0007669"/>
    <property type="project" value="InterPro"/>
</dbReference>
<dbReference type="CDD" id="cd02393">
    <property type="entry name" value="KH-I_PNPase"/>
    <property type="match status" value="1"/>
</dbReference>
<dbReference type="CDD" id="cd11364">
    <property type="entry name" value="RNase_PH_PNPase_2"/>
    <property type="match status" value="1"/>
</dbReference>
<dbReference type="FunFam" id="3.30.1370.10:FF:000001">
    <property type="entry name" value="Polyribonucleotide nucleotidyltransferase"/>
    <property type="match status" value="1"/>
</dbReference>
<dbReference type="FunFam" id="3.30.230.70:FF:000026">
    <property type="entry name" value="Polyribonucleotide nucleotidyltransferase"/>
    <property type="match status" value="1"/>
</dbReference>
<dbReference type="FunFam" id="3.30.230.70:FF:000029">
    <property type="entry name" value="Polyribonucleotide nucleotidyltransferase"/>
    <property type="match status" value="1"/>
</dbReference>
<dbReference type="Gene3D" id="3.30.230.70">
    <property type="entry name" value="GHMP Kinase, N-terminal domain"/>
    <property type="match status" value="2"/>
</dbReference>
<dbReference type="Gene3D" id="3.30.1370.10">
    <property type="entry name" value="K Homology domain, type 1"/>
    <property type="match status" value="1"/>
</dbReference>
<dbReference type="Gene3D" id="2.40.50.140">
    <property type="entry name" value="Nucleic acid-binding proteins"/>
    <property type="match status" value="1"/>
</dbReference>
<dbReference type="HAMAP" id="MF_01595">
    <property type="entry name" value="PNPase"/>
    <property type="match status" value="1"/>
</dbReference>
<dbReference type="InterPro" id="IPR001247">
    <property type="entry name" value="ExoRNase_PH_dom1"/>
</dbReference>
<dbReference type="InterPro" id="IPR015847">
    <property type="entry name" value="ExoRNase_PH_dom2"/>
</dbReference>
<dbReference type="InterPro" id="IPR036345">
    <property type="entry name" value="ExoRNase_PH_dom2_sf"/>
</dbReference>
<dbReference type="InterPro" id="IPR004087">
    <property type="entry name" value="KH_dom"/>
</dbReference>
<dbReference type="InterPro" id="IPR004088">
    <property type="entry name" value="KH_dom_type_1"/>
</dbReference>
<dbReference type="InterPro" id="IPR036612">
    <property type="entry name" value="KH_dom_type_1_sf"/>
</dbReference>
<dbReference type="InterPro" id="IPR012340">
    <property type="entry name" value="NA-bd_OB-fold"/>
</dbReference>
<dbReference type="InterPro" id="IPR012162">
    <property type="entry name" value="PNPase"/>
</dbReference>
<dbReference type="InterPro" id="IPR027408">
    <property type="entry name" value="PNPase/RNase_PH_dom_sf"/>
</dbReference>
<dbReference type="InterPro" id="IPR036456">
    <property type="entry name" value="PNPase_PH_RNA-bd_sf"/>
</dbReference>
<dbReference type="InterPro" id="IPR020568">
    <property type="entry name" value="Ribosomal_Su5_D2-typ_SF"/>
</dbReference>
<dbReference type="InterPro" id="IPR003029">
    <property type="entry name" value="S1_domain"/>
</dbReference>
<dbReference type="NCBIfam" id="TIGR03591">
    <property type="entry name" value="polynuc_phos"/>
    <property type="match status" value="1"/>
</dbReference>
<dbReference type="NCBIfam" id="NF008805">
    <property type="entry name" value="PRK11824.1"/>
    <property type="match status" value="1"/>
</dbReference>
<dbReference type="PANTHER" id="PTHR11252">
    <property type="entry name" value="POLYRIBONUCLEOTIDE NUCLEOTIDYLTRANSFERASE"/>
    <property type="match status" value="1"/>
</dbReference>
<dbReference type="PANTHER" id="PTHR11252:SF0">
    <property type="entry name" value="POLYRIBONUCLEOTIDE NUCLEOTIDYLTRANSFERASE 1, MITOCHONDRIAL"/>
    <property type="match status" value="1"/>
</dbReference>
<dbReference type="Pfam" id="PF00013">
    <property type="entry name" value="KH_1"/>
    <property type="match status" value="1"/>
</dbReference>
<dbReference type="Pfam" id="PF01138">
    <property type="entry name" value="RNase_PH"/>
    <property type="match status" value="2"/>
</dbReference>
<dbReference type="Pfam" id="PF03725">
    <property type="entry name" value="RNase_PH_C"/>
    <property type="match status" value="2"/>
</dbReference>
<dbReference type="Pfam" id="PF00575">
    <property type="entry name" value="S1"/>
    <property type="match status" value="1"/>
</dbReference>
<dbReference type="PIRSF" id="PIRSF005499">
    <property type="entry name" value="PNPase"/>
    <property type="match status" value="1"/>
</dbReference>
<dbReference type="SMART" id="SM00322">
    <property type="entry name" value="KH"/>
    <property type="match status" value="1"/>
</dbReference>
<dbReference type="SMART" id="SM00316">
    <property type="entry name" value="S1"/>
    <property type="match status" value="1"/>
</dbReference>
<dbReference type="SUPFAM" id="SSF54791">
    <property type="entry name" value="Eukaryotic type KH-domain (KH-domain type I)"/>
    <property type="match status" value="1"/>
</dbReference>
<dbReference type="SUPFAM" id="SSF50249">
    <property type="entry name" value="Nucleic acid-binding proteins"/>
    <property type="match status" value="1"/>
</dbReference>
<dbReference type="SUPFAM" id="SSF46915">
    <property type="entry name" value="Polynucleotide phosphorylase/guanosine pentaphosphate synthase (PNPase/GPSI), domain 3"/>
    <property type="match status" value="1"/>
</dbReference>
<dbReference type="SUPFAM" id="SSF55666">
    <property type="entry name" value="Ribonuclease PH domain 2-like"/>
    <property type="match status" value="2"/>
</dbReference>
<dbReference type="SUPFAM" id="SSF54211">
    <property type="entry name" value="Ribosomal protein S5 domain 2-like"/>
    <property type="match status" value="2"/>
</dbReference>
<dbReference type="PROSITE" id="PS50084">
    <property type="entry name" value="KH_TYPE_1"/>
    <property type="match status" value="1"/>
</dbReference>
<dbReference type="PROSITE" id="PS50126">
    <property type="entry name" value="S1"/>
    <property type="match status" value="1"/>
</dbReference>
<accession>Q1CS51</accession>
<feature type="chain" id="PRO_0000329679" description="Polyribonucleotide nucleotidyltransferase">
    <location>
        <begin position="1"/>
        <end position="688"/>
    </location>
</feature>
<feature type="domain" description="KH" evidence="1">
    <location>
        <begin position="550"/>
        <end position="609"/>
    </location>
</feature>
<feature type="domain" description="S1 motif" evidence="1">
    <location>
        <begin position="626"/>
        <end position="688"/>
    </location>
</feature>
<feature type="binding site" evidence="1">
    <location>
        <position position="484"/>
    </location>
    <ligand>
        <name>Mg(2+)</name>
        <dbReference type="ChEBI" id="CHEBI:18420"/>
    </ligand>
</feature>
<feature type="binding site" evidence="1">
    <location>
        <position position="490"/>
    </location>
    <ligand>
        <name>Mg(2+)</name>
        <dbReference type="ChEBI" id="CHEBI:18420"/>
    </ligand>
</feature>
<proteinExistence type="inferred from homology"/>
<comment type="function">
    <text evidence="1">Involved in mRNA degradation. Catalyzes the phosphorolysis of single-stranded polyribonucleotides processively in the 3'- to 5'-direction.</text>
</comment>
<comment type="catalytic activity">
    <reaction evidence="1">
        <text>RNA(n+1) + phosphate = RNA(n) + a ribonucleoside 5'-diphosphate</text>
        <dbReference type="Rhea" id="RHEA:22096"/>
        <dbReference type="Rhea" id="RHEA-COMP:14527"/>
        <dbReference type="Rhea" id="RHEA-COMP:17342"/>
        <dbReference type="ChEBI" id="CHEBI:43474"/>
        <dbReference type="ChEBI" id="CHEBI:57930"/>
        <dbReference type="ChEBI" id="CHEBI:140395"/>
        <dbReference type="EC" id="2.7.7.8"/>
    </reaction>
</comment>
<comment type="cofactor">
    <cofactor evidence="1">
        <name>Mg(2+)</name>
        <dbReference type="ChEBI" id="CHEBI:18420"/>
    </cofactor>
</comment>
<comment type="subcellular location">
    <subcellularLocation>
        <location evidence="1">Cytoplasm</location>
    </subcellularLocation>
</comment>
<comment type="similarity">
    <text evidence="1">Belongs to the polyribonucleotide nucleotidyltransferase family.</text>
</comment>
<evidence type="ECO:0000255" key="1">
    <source>
        <dbReference type="HAMAP-Rule" id="MF_01595"/>
    </source>
</evidence>
<gene>
    <name evidence="1" type="primary">pnp</name>
    <name type="ordered locus">HPAG1_1154</name>
</gene>
<name>PNP_HELPH</name>
<sequence>MDFITINSSNKTEEFALKQVVKQATSSLLYRLGKTIILASVCVEREPVSEDFLPLVVQFLEKSYAAGKIPGGFVKREGRAQDFEILTSRLIDRTLRPLFPKDYRYPTQITLMVLSHDIENDLQVSALNAASAALFLAHIAPIKSVSACRIARIGNEFIINPNTSLLNQSSLDLFVSGTKESLNMIEMRSLGQQLNALEEPLMLKALELAQKSLKETCTLYEEVFTPHQNELLFKESQGIIFNERLLDLLKNQYFDEIIKGIESSALSERENVFNEIAKKISEAHSEFSLEEIEWSLEKVKKTEIRRMIIQDKIRPDKRALEEVRPILIESDLLPMAHSSILFTRGQTQSLVVGVLGTDNDAQTHESLEHKAPIKERFMFHYNFPPFCVGEASSIGAASRRELGHGNLAKRALETSIKNKEQVIRLVSEILESNGSSSMASVCAGSLALYASGVEIHDLVAGVAMGMVSEGQDHAILSDISGLEDAEGDMDFKIAGNLEGITAMQMDTKMSGIQLEILYQALLQAKEARKHILKIMHEAKEKIVINFSHLPTTEIFNVAPDKIVEIIGQGGRVIKEIVEKFEVKIDLNKPSGEVKIMGNKERVLKTKEFILNYLHSLDQELEQYAIDEVLEAQVKRIVDFGAFLSLPKGGEGLLRKQNMDRCQVVLKEGDSIRCRVISFNKGKIALDLA</sequence>
<protein>
    <recommendedName>
        <fullName evidence="1">Polyribonucleotide nucleotidyltransferase</fullName>
        <ecNumber evidence="1">2.7.7.8</ecNumber>
    </recommendedName>
    <alternativeName>
        <fullName evidence="1">Polynucleotide phosphorylase</fullName>
        <shortName evidence="1">PNPase</shortName>
    </alternativeName>
</protein>
<reference key="1">
    <citation type="journal article" date="2006" name="Proc. Natl. Acad. Sci. U.S.A.">
        <title>The complete genome sequence of a chronic atrophic gastritis Helicobacter pylori strain: evolution during disease progression.</title>
        <authorList>
            <person name="Oh J.D."/>
            <person name="Kling-Baeckhed H."/>
            <person name="Giannakis M."/>
            <person name="Xu J."/>
            <person name="Fulton R.S."/>
            <person name="Fulton L.A."/>
            <person name="Cordum H.S."/>
            <person name="Wang C."/>
            <person name="Elliott G."/>
            <person name="Edwards J."/>
            <person name="Mardis E.R."/>
            <person name="Engstrand L.G."/>
            <person name="Gordon J.I."/>
        </authorList>
    </citation>
    <scope>NUCLEOTIDE SEQUENCE [LARGE SCALE GENOMIC DNA]</scope>
    <source>
        <strain>HPAG1</strain>
    </source>
</reference>